<dbReference type="EC" id="4.1.1.31" evidence="1"/>
<dbReference type="EMBL" id="CP000682">
    <property type="protein sequence ID" value="ABP94931.1"/>
    <property type="molecule type" value="Genomic_DNA"/>
</dbReference>
<dbReference type="RefSeq" id="WP_012020718.1">
    <property type="nucleotide sequence ID" value="NC_009440.1"/>
</dbReference>
<dbReference type="SMR" id="A4YES9"/>
<dbReference type="STRING" id="399549.Msed_0756"/>
<dbReference type="GeneID" id="91755214"/>
<dbReference type="KEGG" id="mse:Msed_0756"/>
<dbReference type="eggNOG" id="arCOG04435">
    <property type="taxonomic scope" value="Archaea"/>
</dbReference>
<dbReference type="HOGENOM" id="CLU_517433_0_0_2"/>
<dbReference type="Proteomes" id="UP000000242">
    <property type="component" value="Chromosome"/>
</dbReference>
<dbReference type="GO" id="GO:0000287">
    <property type="term" value="F:magnesium ion binding"/>
    <property type="evidence" value="ECO:0007669"/>
    <property type="project" value="UniProtKB-UniRule"/>
</dbReference>
<dbReference type="GO" id="GO:0008964">
    <property type="term" value="F:phosphoenolpyruvate carboxylase activity"/>
    <property type="evidence" value="ECO:0007669"/>
    <property type="project" value="UniProtKB-UniRule"/>
</dbReference>
<dbReference type="GO" id="GO:0015977">
    <property type="term" value="P:carbon fixation"/>
    <property type="evidence" value="ECO:0007669"/>
    <property type="project" value="UniProtKB-UniRule"/>
</dbReference>
<dbReference type="GO" id="GO:0006107">
    <property type="term" value="P:oxaloacetate metabolic process"/>
    <property type="evidence" value="ECO:0007669"/>
    <property type="project" value="UniProtKB-UniRule"/>
</dbReference>
<dbReference type="GO" id="GO:0006099">
    <property type="term" value="P:tricarboxylic acid cycle"/>
    <property type="evidence" value="ECO:0007669"/>
    <property type="project" value="InterPro"/>
</dbReference>
<dbReference type="HAMAP" id="MF_01904">
    <property type="entry name" value="PEPcase_type2"/>
    <property type="match status" value="1"/>
</dbReference>
<dbReference type="InterPro" id="IPR007566">
    <property type="entry name" value="PEP_COase_arc-type"/>
</dbReference>
<dbReference type="InterPro" id="IPR015813">
    <property type="entry name" value="Pyrv/PenolPyrv_kinase-like_dom"/>
</dbReference>
<dbReference type="NCBIfam" id="TIGR02751">
    <property type="entry name" value="PEPCase_arch"/>
    <property type="match status" value="1"/>
</dbReference>
<dbReference type="Pfam" id="PF14010">
    <property type="entry name" value="PEPcase_2"/>
    <property type="match status" value="1"/>
</dbReference>
<dbReference type="PIRSF" id="PIRSF006677">
    <property type="entry name" value="UCP006677"/>
    <property type="match status" value="1"/>
</dbReference>
<dbReference type="SUPFAM" id="SSF51621">
    <property type="entry name" value="Phosphoenolpyruvate/pyruvate domain"/>
    <property type="match status" value="1"/>
</dbReference>
<feature type="chain" id="PRO_1000088478" description="Phosphoenolpyruvate carboxylase">
    <location>
        <begin position="1"/>
        <end position="509"/>
    </location>
</feature>
<gene>
    <name evidence="1" type="primary">ppcA</name>
    <name type="ordered locus">Msed_0756</name>
</gene>
<keyword id="KW-0120">Carbon dioxide fixation</keyword>
<keyword id="KW-0456">Lyase</keyword>
<keyword id="KW-0460">Magnesium</keyword>
<keyword id="KW-1185">Reference proteome</keyword>
<sequence>MRPIPRTMSTQHPDNATVPEWAKGDVIEGEAEVIEAYYAFSRLNVHEVMWDAEGKDVDTHVVRKLFSSFDEYFKNNILGEDIFLTYRLPNPKIEGAERKVFAETMESIPITFDVAERFYGRKVVPVFEVILPFTTNASDIISVARYYERAVAMEENIELQDGVYVRDLVGEIYPKRIEVIPLIEDKDSLLNTRNIIEGYYRAIKPSYMRLFIARSDPAMNYGMLTAVLLAKYALSEAGKLAEELGIPIFPIIGVGSLPFRGHLSPENYQRVMEEYEGVYTFTIQSAFKYDYSEEQVKGAISHINREEVKEPRILGEEEKKVTRDIIETYTLSYQPVIESLANLINTVALHLPRRRARKLHISLFGYARSTGKVMLPRAITFVGSLYSVGLPPEVIGISSLGKLNEMQWNILEENYKFLKNDLQKASEFINPEGLSTLVSYGYLDAEISKKLEEDIKYLESMGVKIGPRSYETKKHALLSQLLMLSLKEKKYNEVKQYAREMAVIRKSIG</sequence>
<proteinExistence type="inferred from homology"/>
<accession>A4YES9</accession>
<organism>
    <name type="scientific">Metallosphaera sedula (strain ATCC 51363 / DSM 5348 / JCM 9185 / NBRC 15509 / TH2)</name>
    <dbReference type="NCBI Taxonomy" id="399549"/>
    <lineage>
        <taxon>Archaea</taxon>
        <taxon>Thermoproteota</taxon>
        <taxon>Thermoprotei</taxon>
        <taxon>Sulfolobales</taxon>
        <taxon>Sulfolobaceae</taxon>
        <taxon>Metallosphaera</taxon>
    </lineage>
</organism>
<name>CAPPA_METS5</name>
<protein>
    <recommendedName>
        <fullName evidence="1">Phosphoenolpyruvate carboxylase</fullName>
        <shortName evidence="1">PEPC</shortName>
        <shortName evidence="1">PEPCase</shortName>
        <ecNumber evidence="1">4.1.1.31</ecNumber>
    </recommendedName>
</protein>
<reference key="1">
    <citation type="journal article" date="2008" name="Appl. Environ. Microbiol.">
        <title>The genome sequence of the metal-mobilizing, extremely thermoacidophilic archaeon Metallosphaera sedula provides insights into bioleaching-associated metabolism.</title>
        <authorList>
            <person name="Auernik K.S."/>
            <person name="Maezato Y."/>
            <person name="Blum P.H."/>
            <person name="Kelly R.M."/>
        </authorList>
    </citation>
    <scope>NUCLEOTIDE SEQUENCE [LARGE SCALE GENOMIC DNA]</scope>
    <source>
        <strain>ATCC 51363 / DSM 5348 / JCM 9185 / NBRC 15509 / TH2</strain>
    </source>
</reference>
<evidence type="ECO:0000255" key="1">
    <source>
        <dbReference type="HAMAP-Rule" id="MF_01904"/>
    </source>
</evidence>
<comment type="function">
    <text evidence="1">Catalyzes the irreversible beta-carboxylation of phosphoenolpyruvate (PEP) to form oxaloacetate (OAA), a four-carbon dicarboxylic acid source for the tricarboxylic acid cycle.</text>
</comment>
<comment type="catalytic activity">
    <reaction evidence="1">
        <text>oxaloacetate + phosphate = phosphoenolpyruvate + hydrogencarbonate</text>
        <dbReference type="Rhea" id="RHEA:28370"/>
        <dbReference type="ChEBI" id="CHEBI:16452"/>
        <dbReference type="ChEBI" id="CHEBI:17544"/>
        <dbReference type="ChEBI" id="CHEBI:43474"/>
        <dbReference type="ChEBI" id="CHEBI:58702"/>
        <dbReference type="EC" id="4.1.1.31"/>
    </reaction>
</comment>
<comment type="cofactor">
    <cofactor evidence="1">
        <name>Mg(2+)</name>
        <dbReference type="ChEBI" id="CHEBI:18420"/>
    </cofactor>
</comment>
<comment type="subunit">
    <text evidence="1">Homotetramer.</text>
</comment>
<comment type="similarity">
    <text evidence="1">Belongs to the PEPCase type 2 family.</text>
</comment>